<evidence type="ECO:0000250" key="1"/>
<evidence type="ECO:0000255" key="2">
    <source>
        <dbReference type="PROSITE-ProRule" id="PRU00794"/>
    </source>
</evidence>
<evidence type="ECO:0000305" key="3"/>
<proteinExistence type="inferred from homology"/>
<organism>
    <name type="scientific">Mycobacterium tuberculosis (strain CDC 1551 / Oshkosh)</name>
    <dbReference type="NCBI Taxonomy" id="83331"/>
    <lineage>
        <taxon>Bacteria</taxon>
        <taxon>Bacillati</taxon>
        <taxon>Actinomycetota</taxon>
        <taxon>Actinomycetes</taxon>
        <taxon>Mycobacteriales</taxon>
        <taxon>Mycobacteriaceae</taxon>
        <taxon>Mycobacterium</taxon>
        <taxon>Mycobacterium tuberculosis complex</taxon>
    </lineage>
</organism>
<reference key="1">
    <citation type="journal article" date="2002" name="J. Bacteriol.">
        <title>Whole-genome comparison of Mycobacterium tuberculosis clinical and laboratory strains.</title>
        <authorList>
            <person name="Fleischmann R.D."/>
            <person name="Alland D."/>
            <person name="Eisen J.A."/>
            <person name="Carpenter L."/>
            <person name="White O."/>
            <person name="Peterson J.D."/>
            <person name="DeBoy R.T."/>
            <person name="Dodson R.J."/>
            <person name="Gwinn M.L."/>
            <person name="Haft D.H."/>
            <person name="Hickey E.K."/>
            <person name="Kolonay J.F."/>
            <person name="Nelson W.C."/>
            <person name="Umayam L.A."/>
            <person name="Ermolaeva M.D."/>
            <person name="Salzberg S.L."/>
            <person name="Delcher A."/>
            <person name="Utterback T.R."/>
            <person name="Weidman J.F."/>
            <person name="Khouri H.M."/>
            <person name="Gill J."/>
            <person name="Mikula A."/>
            <person name="Bishai W."/>
            <person name="Jacobs W.R. Jr."/>
            <person name="Venter J.C."/>
            <person name="Fraser C.M."/>
        </authorList>
    </citation>
    <scope>NUCLEOTIDE SEQUENCE [LARGE SCALE GENOMIC DNA]</scope>
    <source>
        <strain>CDC 1551 / Oshkosh</strain>
    </source>
</reference>
<feature type="chain" id="PRO_0000427926" description="Putative 8-oxo-dGTP diphosphatase 2">
    <location>
        <begin position="1"/>
        <end position="141"/>
    </location>
</feature>
<feature type="domain" description="Nudix hydrolase" evidence="2">
    <location>
        <begin position="2"/>
        <end position="131"/>
    </location>
</feature>
<feature type="short sequence motif" description="Nudix box">
    <location>
        <begin position="37"/>
        <end position="58"/>
    </location>
</feature>
<feature type="binding site" evidence="1">
    <location>
        <position position="37"/>
    </location>
    <ligand>
        <name>Mg(2+)</name>
        <dbReference type="ChEBI" id="CHEBI:18420"/>
    </ligand>
</feature>
<feature type="binding site" evidence="1">
    <location>
        <position position="52"/>
    </location>
    <ligand>
        <name>Mg(2+)</name>
        <dbReference type="ChEBI" id="CHEBI:18420"/>
    </ligand>
</feature>
<feature type="binding site" evidence="1">
    <location>
        <position position="55"/>
    </location>
    <ligand>
        <name>Mg(2+)</name>
        <dbReference type="ChEBI" id="CHEBI:18420"/>
    </ligand>
</feature>
<feature type="binding site" evidence="1">
    <location>
        <position position="56"/>
    </location>
    <ligand>
        <name>Mg(2+)</name>
        <dbReference type="ChEBI" id="CHEBI:18420"/>
    </ligand>
</feature>
<accession>P9WIY0</accession>
<accession>L0T5W0</accession>
<accession>O06558</accession>
<accession>Q7D8R0</accession>
<dbReference type="EC" id="3.6.1.55"/>
<dbReference type="EMBL" id="AE000516">
    <property type="protein sequence ID" value="AAK45454.1"/>
    <property type="molecule type" value="Genomic_DNA"/>
</dbReference>
<dbReference type="PIR" id="A70556">
    <property type="entry name" value="A70556"/>
</dbReference>
<dbReference type="SMR" id="P9WIY0"/>
<dbReference type="KEGG" id="mtc:MT1197"/>
<dbReference type="PATRIC" id="fig|83331.31.peg.1297"/>
<dbReference type="HOGENOM" id="CLU_037162_19_0_11"/>
<dbReference type="Proteomes" id="UP000001020">
    <property type="component" value="Chromosome"/>
</dbReference>
<dbReference type="GO" id="GO:0035539">
    <property type="term" value="F:8-oxo-7,8-dihydrodeoxyguanosine triphosphate pyrophosphatase activity"/>
    <property type="evidence" value="ECO:0007669"/>
    <property type="project" value="UniProtKB-EC"/>
</dbReference>
<dbReference type="GO" id="GO:0008413">
    <property type="term" value="F:8-oxo-7,8-dihydroguanosine triphosphate pyrophosphatase activity"/>
    <property type="evidence" value="ECO:0007669"/>
    <property type="project" value="TreeGrafter"/>
</dbReference>
<dbReference type="GO" id="GO:0044715">
    <property type="term" value="F:8-oxo-dGDP phosphatase activity"/>
    <property type="evidence" value="ECO:0007669"/>
    <property type="project" value="TreeGrafter"/>
</dbReference>
<dbReference type="GO" id="GO:0044716">
    <property type="term" value="F:8-oxo-GDP phosphatase activity"/>
    <property type="evidence" value="ECO:0007669"/>
    <property type="project" value="TreeGrafter"/>
</dbReference>
<dbReference type="GO" id="GO:0046872">
    <property type="term" value="F:metal ion binding"/>
    <property type="evidence" value="ECO:0007669"/>
    <property type="project" value="UniProtKB-KW"/>
</dbReference>
<dbReference type="GO" id="GO:0006281">
    <property type="term" value="P:DNA repair"/>
    <property type="evidence" value="ECO:0007669"/>
    <property type="project" value="UniProtKB-KW"/>
</dbReference>
<dbReference type="GO" id="GO:0006260">
    <property type="term" value="P:DNA replication"/>
    <property type="evidence" value="ECO:0007669"/>
    <property type="project" value="UniProtKB-KW"/>
</dbReference>
<dbReference type="CDD" id="cd03425">
    <property type="entry name" value="NUDIX_MutT_NudA_like"/>
    <property type="match status" value="1"/>
</dbReference>
<dbReference type="Gene3D" id="3.90.79.10">
    <property type="entry name" value="Nucleoside Triphosphate Pyrophosphohydrolase"/>
    <property type="match status" value="1"/>
</dbReference>
<dbReference type="InterPro" id="IPR047127">
    <property type="entry name" value="MutT-like"/>
</dbReference>
<dbReference type="InterPro" id="IPR020476">
    <property type="entry name" value="Nudix_hydrolase"/>
</dbReference>
<dbReference type="InterPro" id="IPR015797">
    <property type="entry name" value="NUDIX_hydrolase-like_dom_sf"/>
</dbReference>
<dbReference type="InterPro" id="IPR020084">
    <property type="entry name" value="NUDIX_hydrolase_CS"/>
</dbReference>
<dbReference type="InterPro" id="IPR000086">
    <property type="entry name" value="NUDIX_hydrolase_dom"/>
</dbReference>
<dbReference type="PANTHER" id="PTHR47707">
    <property type="entry name" value="8-OXO-DGTP DIPHOSPHATASE"/>
    <property type="match status" value="1"/>
</dbReference>
<dbReference type="PANTHER" id="PTHR47707:SF1">
    <property type="entry name" value="NUDIX HYDROLASE FAMILY PROTEIN"/>
    <property type="match status" value="1"/>
</dbReference>
<dbReference type="Pfam" id="PF00293">
    <property type="entry name" value="NUDIX"/>
    <property type="match status" value="1"/>
</dbReference>
<dbReference type="PRINTS" id="PR00502">
    <property type="entry name" value="NUDIXFAMILY"/>
</dbReference>
<dbReference type="SUPFAM" id="SSF55811">
    <property type="entry name" value="Nudix"/>
    <property type="match status" value="1"/>
</dbReference>
<dbReference type="PROSITE" id="PS51462">
    <property type="entry name" value="NUDIX"/>
    <property type="match status" value="1"/>
</dbReference>
<dbReference type="PROSITE" id="PS00893">
    <property type="entry name" value="NUDIX_BOX"/>
    <property type="match status" value="1"/>
</dbReference>
<name>MUTT2_MYCTO</name>
<comment type="function">
    <text evidence="1">May be involved in the GO system responsible for removing an oxidatively damaged form of guanine (7,8-dihydro-8-oxoguanine, 8-oxo-dGTP) from DNA and the nucleotide pool. 8-oxo-dGTP is inserted opposite dA and dC residues of template DNA with almost equal efficiency thus leading to A.T to G.C transversions. MutT specifically degrades 8-oxo-dGTP to the monophosphate (By similarity).</text>
</comment>
<comment type="catalytic activity">
    <reaction>
        <text>8-oxo-dGTP + H2O = 8-oxo-dGMP + diphosphate + H(+)</text>
        <dbReference type="Rhea" id="RHEA:31575"/>
        <dbReference type="ChEBI" id="CHEBI:15377"/>
        <dbReference type="ChEBI" id="CHEBI:15378"/>
        <dbReference type="ChEBI" id="CHEBI:33019"/>
        <dbReference type="ChEBI" id="CHEBI:63224"/>
        <dbReference type="ChEBI" id="CHEBI:77896"/>
        <dbReference type="EC" id="3.6.1.55"/>
    </reaction>
</comment>
<comment type="cofactor">
    <cofactor evidence="1">
        <name>Mg(2+)</name>
        <dbReference type="ChEBI" id="CHEBI:18420"/>
    </cofactor>
    <cofactor evidence="1">
        <name>Mn(2+)</name>
        <dbReference type="ChEBI" id="CHEBI:29035"/>
    </cofactor>
</comment>
<comment type="similarity">
    <text evidence="3">Belongs to the Nudix hydrolase family.</text>
</comment>
<protein>
    <recommendedName>
        <fullName>Putative 8-oxo-dGTP diphosphatase 2</fullName>
        <shortName>8-oxo-dGTPase 2</shortName>
        <ecNumber>3.6.1.55</ecNumber>
    </recommendedName>
    <alternativeName>
        <fullName>7,8-dihydro-8-oxoguanine-triphosphatase 2</fullName>
    </alternativeName>
    <alternativeName>
        <fullName>Mutator protein MutT2</fullName>
    </alternativeName>
    <alternativeName>
        <fullName>dGTP pyrophosphohydrolase 2</fullName>
    </alternativeName>
</protein>
<sequence>MLNQIVVAGAIVRGCTVLVAQRVRPPELAGRWELPGGKVAAGETERAALARELAEELGLEVADLAVGDRVGDDIALNGTTTLRAYRVHLLGGEPRARDHRALCWVTAAELHDVDWVPADRGWIADLARTLNGSAADVHRRC</sequence>
<gene>
    <name type="primary">mutT2</name>
    <name type="ordered locus">MT1197</name>
</gene>
<keyword id="KW-0227">DNA damage</keyword>
<keyword id="KW-0234">DNA repair</keyword>
<keyword id="KW-0235">DNA replication</keyword>
<keyword id="KW-0378">Hydrolase</keyword>
<keyword id="KW-0460">Magnesium</keyword>
<keyword id="KW-0464">Manganese</keyword>
<keyword id="KW-0479">Metal-binding</keyword>
<keyword id="KW-0515">Mutator protein</keyword>
<keyword id="KW-1185">Reference proteome</keyword>